<comment type="function">
    <text evidence="1">Involved in the third step of the chorismate pathway, which leads to the biosynthesis of aromatic amino acids. Catalyzes the cis-dehydration of 3-dehydroquinate (DHQ) and introduces the first double bond of the aromatic ring to yield 3-dehydroshikimate.</text>
</comment>
<comment type="catalytic activity">
    <reaction evidence="1">
        <text>3-dehydroquinate = 3-dehydroshikimate + H2O</text>
        <dbReference type="Rhea" id="RHEA:21096"/>
        <dbReference type="ChEBI" id="CHEBI:15377"/>
        <dbReference type="ChEBI" id="CHEBI:16630"/>
        <dbReference type="ChEBI" id="CHEBI:32364"/>
        <dbReference type="EC" id="4.2.1.10"/>
    </reaction>
</comment>
<comment type="pathway">
    <text evidence="1">Metabolic intermediate biosynthesis; chorismate biosynthesis; chorismate from D-erythrose 4-phosphate and phosphoenolpyruvate: step 3/7.</text>
</comment>
<comment type="subunit">
    <text evidence="1">Homodimer.</text>
</comment>
<comment type="similarity">
    <text evidence="1">Belongs to the type-I 3-dehydroquinase family.</text>
</comment>
<dbReference type="EC" id="4.2.1.10" evidence="1"/>
<dbReference type="EMBL" id="AE014133">
    <property type="protein sequence ID" value="AAN58497.1"/>
    <property type="molecule type" value="Genomic_DNA"/>
</dbReference>
<dbReference type="RefSeq" id="NP_721191.1">
    <property type="nucleotide sequence ID" value="NC_004350.2"/>
</dbReference>
<dbReference type="RefSeq" id="WP_002261931.1">
    <property type="nucleotide sequence ID" value="NC_004350.2"/>
</dbReference>
<dbReference type="PDB" id="3L9C">
    <property type="method" value="X-ray"/>
    <property type="resolution" value="1.60 A"/>
    <property type="chains" value="A/B=1-225"/>
</dbReference>
<dbReference type="PDBsum" id="3L9C"/>
<dbReference type="SMR" id="Q8DUW4"/>
<dbReference type="STRING" id="210007.SMU_777"/>
<dbReference type="GeneID" id="93859685"/>
<dbReference type="KEGG" id="smu:SMU_777"/>
<dbReference type="PATRIC" id="fig|210007.7.peg.688"/>
<dbReference type="eggNOG" id="COG0710">
    <property type="taxonomic scope" value="Bacteria"/>
</dbReference>
<dbReference type="HOGENOM" id="CLU_064444_0_0_9"/>
<dbReference type="OrthoDB" id="9813659at2"/>
<dbReference type="PhylomeDB" id="Q8DUW4"/>
<dbReference type="UniPathway" id="UPA00053">
    <property type="reaction ID" value="UER00086"/>
</dbReference>
<dbReference type="EvolutionaryTrace" id="Q8DUW4"/>
<dbReference type="Proteomes" id="UP000002512">
    <property type="component" value="Chromosome"/>
</dbReference>
<dbReference type="GO" id="GO:0003855">
    <property type="term" value="F:3-dehydroquinate dehydratase activity"/>
    <property type="evidence" value="ECO:0007669"/>
    <property type="project" value="UniProtKB-UniRule"/>
</dbReference>
<dbReference type="GO" id="GO:0046279">
    <property type="term" value="P:3,4-dihydroxybenzoate biosynthetic process"/>
    <property type="evidence" value="ECO:0007669"/>
    <property type="project" value="UniProtKB-ARBA"/>
</dbReference>
<dbReference type="GO" id="GO:0008652">
    <property type="term" value="P:amino acid biosynthetic process"/>
    <property type="evidence" value="ECO:0007669"/>
    <property type="project" value="UniProtKB-KW"/>
</dbReference>
<dbReference type="GO" id="GO:0009073">
    <property type="term" value="P:aromatic amino acid family biosynthetic process"/>
    <property type="evidence" value="ECO:0007669"/>
    <property type="project" value="UniProtKB-KW"/>
</dbReference>
<dbReference type="GO" id="GO:0009423">
    <property type="term" value="P:chorismate biosynthetic process"/>
    <property type="evidence" value="ECO:0007669"/>
    <property type="project" value="UniProtKB-UniRule"/>
</dbReference>
<dbReference type="CDD" id="cd00502">
    <property type="entry name" value="DHQase_I"/>
    <property type="match status" value="1"/>
</dbReference>
<dbReference type="FunFam" id="3.20.20.70:FF:000047">
    <property type="entry name" value="3-dehydroquinate dehydratase"/>
    <property type="match status" value="1"/>
</dbReference>
<dbReference type="Gene3D" id="3.20.20.70">
    <property type="entry name" value="Aldolase class I"/>
    <property type="match status" value="1"/>
</dbReference>
<dbReference type="HAMAP" id="MF_00214">
    <property type="entry name" value="AroD"/>
    <property type="match status" value="1"/>
</dbReference>
<dbReference type="InterPro" id="IPR013785">
    <property type="entry name" value="Aldolase_TIM"/>
</dbReference>
<dbReference type="InterPro" id="IPR001381">
    <property type="entry name" value="DHquinase_I"/>
</dbReference>
<dbReference type="InterPro" id="IPR050146">
    <property type="entry name" value="Type-I_3-dehydroquinase"/>
</dbReference>
<dbReference type="NCBIfam" id="TIGR01093">
    <property type="entry name" value="aroD"/>
    <property type="match status" value="1"/>
</dbReference>
<dbReference type="PANTHER" id="PTHR43699">
    <property type="entry name" value="3-DEHYDROQUINATE DEHYDRATASE"/>
    <property type="match status" value="1"/>
</dbReference>
<dbReference type="PANTHER" id="PTHR43699:SF1">
    <property type="entry name" value="3-DEHYDROQUINATE DEHYDRATASE"/>
    <property type="match status" value="1"/>
</dbReference>
<dbReference type="Pfam" id="PF01487">
    <property type="entry name" value="DHquinase_I"/>
    <property type="match status" value="1"/>
</dbReference>
<dbReference type="SUPFAM" id="SSF51569">
    <property type="entry name" value="Aldolase"/>
    <property type="match status" value="1"/>
</dbReference>
<evidence type="ECO:0000255" key="1">
    <source>
        <dbReference type="HAMAP-Rule" id="MF_00214"/>
    </source>
</evidence>
<evidence type="ECO:0007829" key="2">
    <source>
        <dbReference type="PDB" id="3L9C"/>
    </source>
</evidence>
<accession>Q8DUW4</accession>
<reference key="1">
    <citation type="journal article" date="2002" name="Proc. Natl. Acad. Sci. U.S.A.">
        <title>Genome sequence of Streptococcus mutans UA159, a cariogenic dental pathogen.</title>
        <authorList>
            <person name="Ajdic D.J."/>
            <person name="McShan W.M."/>
            <person name="McLaughlin R.E."/>
            <person name="Savic G."/>
            <person name="Chang J."/>
            <person name="Carson M.B."/>
            <person name="Primeaux C."/>
            <person name="Tian R."/>
            <person name="Kenton S."/>
            <person name="Jia H.G."/>
            <person name="Lin S.P."/>
            <person name="Qian Y."/>
            <person name="Li S."/>
            <person name="Zhu H."/>
            <person name="Najar F.Z."/>
            <person name="Lai H."/>
            <person name="White J."/>
            <person name="Roe B.A."/>
            <person name="Ferretti J.J."/>
        </authorList>
    </citation>
    <scope>NUCLEOTIDE SEQUENCE [LARGE SCALE GENOMIC DNA]</scope>
    <source>
        <strain>ATCC 700610 / UA159</strain>
    </source>
</reference>
<reference key="2">
    <citation type="submission" date="2010-01" db="PDB data bank">
        <title>The crystal structure of smu.777 from Streptococcus mutans UA159.</title>
        <authorList>
            <person name="Su X.-D."/>
            <person name="Huang Y.H."/>
            <person name="Liu X."/>
        </authorList>
    </citation>
    <scope>X-RAY CRYSTALLOGRAPHY (1.60 ANGSTROMS)</scope>
</reference>
<proteinExistence type="evidence at protein level"/>
<sequence>MKIVVPVMPQNIEEANQLDLTRIDSTDIIEWRADYLVKDDILTVAPAIFEKFSGHEVIFTLRTEKEGGNISLSNEDYLAIIRDIAALYQPDYIDFEYFSYRDVLEEMYDFSNLILSYHNFEETPENLMEVFSELTALAPRVVKIAVMPKNEQDVLDLMNYTRGFKTLNPNQEYVTMSMSKLGRISRLAADLIGSSWTFASLEQESAPGQISLADMRKIKEVLDAN</sequence>
<protein>
    <recommendedName>
        <fullName evidence="1">3-dehydroquinate dehydratase</fullName>
        <shortName evidence="1">3-dehydroquinase</shortName>
        <ecNumber evidence="1">4.2.1.10</ecNumber>
    </recommendedName>
    <alternativeName>
        <fullName evidence="1">Type I DHQase</fullName>
    </alternativeName>
    <alternativeName>
        <fullName evidence="1">Type I dehydroquinase</fullName>
        <shortName evidence="1">DHQ1</shortName>
    </alternativeName>
</protein>
<name>AROD_STRMU</name>
<gene>
    <name evidence="1" type="primary">aroD</name>
    <name type="ordered locus">SMU_777</name>
</gene>
<feature type="chain" id="PRO_1000043194" description="3-dehydroquinate dehydratase">
    <location>
        <begin position="1"/>
        <end position="225"/>
    </location>
</feature>
<feature type="active site" description="Proton donor/acceptor" evidence="1">
    <location>
        <position position="118"/>
    </location>
</feature>
<feature type="active site" description="Schiff-base intermediate with substrate" evidence="1">
    <location>
        <position position="143"/>
    </location>
</feature>
<feature type="binding site" evidence="1">
    <location>
        <begin position="30"/>
        <end position="32"/>
    </location>
    <ligand>
        <name>3-dehydroquinate</name>
        <dbReference type="ChEBI" id="CHEBI:32364"/>
    </ligand>
</feature>
<feature type="binding site" evidence="1">
    <location>
        <position position="62"/>
    </location>
    <ligand>
        <name>3-dehydroquinate</name>
        <dbReference type="ChEBI" id="CHEBI:32364"/>
    </ligand>
</feature>
<feature type="binding site" evidence="1">
    <location>
        <position position="186"/>
    </location>
    <ligand>
        <name>3-dehydroquinate</name>
        <dbReference type="ChEBI" id="CHEBI:32364"/>
    </ligand>
</feature>
<feature type="binding site" evidence="1">
    <location>
        <position position="205"/>
    </location>
    <ligand>
        <name>3-dehydroquinate</name>
        <dbReference type="ChEBI" id="CHEBI:32364"/>
    </ligand>
</feature>
<feature type="binding site" evidence="1">
    <location>
        <position position="209"/>
    </location>
    <ligand>
        <name>3-dehydroquinate</name>
        <dbReference type="ChEBI" id="CHEBI:32364"/>
    </ligand>
</feature>
<feature type="strand" evidence="2">
    <location>
        <begin position="2"/>
        <end position="7"/>
    </location>
</feature>
<feature type="helix" evidence="2">
    <location>
        <begin position="12"/>
        <end position="17"/>
    </location>
</feature>
<feature type="strand" evidence="2">
    <location>
        <begin position="28"/>
        <end position="32"/>
    </location>
</feature>
<feature type="helix" evidence="2">
    <location>
        <begin position="33"/>
        <end position="35"/>
    </location>
</feature>
<feature type="helix" evidence="2">
    <location>
        <begin position="38"/>
        <end position="40"/>
    </location>
</feature>
<feature type="helix" evidence="2">
    <location>
        <begin position="41"/>
        <end position="51"/>
    </location>
</feature>
<feature type="turn" evidence="2">
    <location>
        <begin position="52"/>
        <end position="54"/>
    </location>
</feature>
<feature type="strand" evidence="2">
    <location>
        <begin position="55"/>
        <end position="60"/>
    </location>
</feature>
<feature type="helix" evidence="2">
    <location>
        <begin position="64"/>
        <end position="66"/>
    </location>
</feature>
<feature type="helix" evidence="2">
    <location>
        <begin position="74"/>
        <end position="88"/>
    </location>
</feature>
<feature type="strand" evidence="2">
    <location>
        <begin position="91"/>
        <end position="96"/>
    </location>
</feature>
<feature type="helix" evidence="2">
    <location>
        <begin position="97"/>
        <end position="100"/>
    </location>
</feature>
<feature type="helix" evidence="2">
    <location>
        <begin position="101"/>
        <end position="107"/>
    </location>
</feature>
<feature type="strand" evidence="2">
    <location>
        <begin position="111"/>
        <end position="121"/>
    </location>
</feature>
<feature type="helix" evidence="2">
    <location>
        <begin position="127"/>
        <end position="136"/>
    </location>
</feature>
<feature type="strand" evidence="2">
    <location>
        <begin position="140"/>
        <end position="146"/>
    </location>
</feature>
<feature type="helix" evidence="2">
    <location>
        <begin position="151"/>
        <end position="167"/>
    </location>
</feature>
<feature type="strand" evidence="2">
    <location>
        <begin position="171"/>
        <end position="177"/>
    </location>
</feature>
<feature type="helix" evidence="2">
    <location>
        <begin position="180"/>
        <end position="182"/>
    </location>
</feature>
<feature type="helix" evidence="2">
    <location>
        <begin position="183"/>
        <end position="187"/>
    </location>
</feature>
<feature type="helix" evidence="2">
    <location>
        <begin position="189"/>
        <end position="192"/>
    </location>
</feature>
<feature type="strand" evidence="2">
    <location>
        <begin position="194"/>
        <end position="198"/>
    </location>
</feature>
<feature type="helix" evidence="2">
    <location>
        <begin position="212"/>
        <end position="223"/>
    </location>
</feature>
<keyword id="KW-0002">3D-structure</keyword>
<keyword id="KW-0028">Amino-acid biosynthesis</keyword>
<keyword id="KW-0057">Aromatic amino acid biosynthesis</keyword>
<keyword id="KW-0456">Lyase</keyword>
<keyword id="KW-1185">Reference proteome</keyword>
<keyword id="KW-0704">Schiff base</keyword>
<organism>
    <name type="scientific">Streptococcus mutans serotype c (strain ATCC 700610 / UA159)</name>
    <dbReference type="NCBI Taxonomy" id="210007"/>
    <lineage>
        <taxon>Bacteria</taxon>
        <taxon>Bacillati</taxon>
        <taxon>Bacillota</taxon>
        <taxon>Bacilli</taxon>
        <taxon>Lactobacillales</taxon>
        <taxon>Streptococcaceae</taxon>
        <taxon>Streptococcus</taxon>
    </lineage>
</organism>